<dbReference type="EC" id="3.6.4.-" evidence="1"/>
<dbReference type="EMBL" id="AF313410">
    <property type="protein sequence ID" value="AAG37273.1"/>
    <property type="molecule type" value="Genomic_DNA"/>
</dbReference>
<dbReference type="EMBL" id="CP077717">
    <property type="protein sequence ID" value="QXJ27636.1"/>
    <property type="molecule type" value="Genomic_DNA"/>
</dbReference>
<dbReference type="EMBL" id="AF149922">
    <property type="protein sequence ID" value="AAF03363.1"/>
    <property type="molecule type" value="Genomic_DNA"/>
</dbReference>
<dbReference type="RefSeq" id="WP_218267481.1">
    <property type="nucleotide sequence ID" value="NZ_CP077717.1"/>
</dbReference>
<dbReference type="SMR" id="Q9HH21"/>
<dbReference type="GeneID" id="65562112"/>
<dbReference type="KEGG" id="sshi:J5U23_00503"/>
<dbReference type="OrthoDB" id="9362at2157"/>
<dbReference type="Proteomes" id="UP000694018">
    <property type="component" value="Chromosome"/>
</dbReference>
<dbReference type="GO" id="GO:0005737">
    <property type="term" value="C:cytoplasm"/>
    <property type="evidence" value="ECO:0007669"/>
    <property type="project" value="UniProtKB-SubCell"/>
</dbReference>
<dbReference type="GO" id="GO:0005524">
    <property type="term" value="F:ATP binding"/>
    <property type="evidence" value="ECO:0007669"/>
    <property type="project" value="UniProtKB-KW"/>
</dbReference>
<dbReference type="GO" id="GO:0016887">
    <property type="term" value="F:ATP hydrolysis activity"/>
    <property type="evidence" value="ECO:0007669"/>
    <property type="project" value="InterPro"/>
</dbReference>
<dbReference type="GO" id="GO:0140662">
    <property type="term" value="F:ATP-dependent protein folding chaperone"/>
    <property type="evidence" value="ECO:0007669"/>
    <property type="project" value="InterPro"/>
</dbReference>
<dbReference type="GO" id="GO:0051082">
    <property type="term" value="F:unfolded protein binding"/>
    <property type="evidence" value="ECO:0007669"/>
    <property type="project" value="InterPro"/>
</dbReference>
<dbReference type="CDD" id="cd03343">
    <property type="entry name" value="cpn60"/>
    <property type="match status" value="1"/>
</dbReference>
<dbReference type="Gene3D" id="3.50.7.10">
    <property type="entry name" value="GroEL"/>
    <property type="match status" value="1"/>
</dbReference>
<dbReference type="Gene3D" id="1.10.560.10">
    <property type="entry name" value="GroEL-like equatorial domain"/>
    <property type="match status" value="1"/>
</dbReference>
<dbReference type="Gene3D" id="3.30.260.10">
    <property type="entry name" value="TCP-1-like chaperonin intermediate domain"/>
    <property type="match status" value="1"/>
</dbReference>
<dbReference type="InterPro" id="IPR017998">
    <property type="entry name" value="Chaperone_TCP-1"/>
</dbReference>
<dbReference type="InterPro" id="IPR002194">
    <property type="entry name" value="Chaperonin_TCP-1_CS"/>
</dbReference>
<dbReference type="InterPro" id="IPR002423">
    <property type="entry name" value="Cpn60/GroEL/TCP-1"/>
</dbReference>
<dbReference type="InterPro" id="IPR027409">
    <property type="entry name" value="GroEL-like_apical_dom_sf"/>
</dbReference>
<dbReference type="InterPro" id="IPR027413">
    <property type="entry name" value="GROEL-like_equatorial_sf"/>
</dbReference>
<dbReference type="InterPro" id="IPR027410">
    <property type="entry name" value="TCP-1-like_intermed_sf"/>
</dbReference>
<dbReference type="InterPro" id="IPR053374">
    <property type="entry name" value="TCP-1_chaperonin"/>
</dbReference>
<dbReference type="InterPro" id="IPR054827">
    <property type="entry name" value="thermosome_alpha"/>
</dbReference>
<dbReference type="InterPro" id="IPR012714">
    <property type="entry name" value="Thermosome_arc"/>
</dbReference>
<dbReference type="NCBIfam" id="NF041082">
    <property type="entry name" value="thermosome_alpha"/>
    <property type="match status" value="1"/>
</dbReference>
<dbReference type="NCBIfam" id="TIGR02339">
    <property type="entry name" value="thermosome_arch"/>
    <property type="match status" value="1"/>
</dbReference>
<dbReference type="NCBIfam" id="NF041083">
    <property type="entry name" value="thermosome_beta"/>
    <property type="match status" value="1"/>
</dbReference>
<dbReference type="PANTHER" id="PTHR11353">
    <property type="entry name" value="CHAPERONIN"/>
    <property type="match status" value="1"/>
</dbReference>
<dbReference type="Pfam" id="PF00118">
    <property type="entry name" value="Cpn60_TCP1"/>
    <property type="match status" value="1"/>
</dbReference>
<dbReference type="PRINTS" id="PR00304">
    <property type="entry name" value="TCOMPLEXTCP1"/>
</dbReference>
<dbReference type="SUPFAM" id="SSF52029">
    <property type="entry name" value="GroEL apical domain-like"/>
    <property type="match status" value="1"/>
</dbReference>
<dbReference type="SUPFAM" id="SSF48592">
    <property type="entry name" value="GroEL equatorial domain-like"/>
    <property type="match status" value="1"/>
</dbReference>
<dbReference type="SUPFAM" id="SSF54849">
    <property type="entry name" value="GroEL-intermediate domain like"/>
    <property type="match status" value="1"/>
</dbReference>
<dbReference type="PROSITE" id="PS00750">
    <property type="entry name" value="TCP1_1"/>
    <property type="match status" value="1"/>
</dbReference>
<dbReference type="PROSITE" id="PS00751">
    <property type="entry name" value="TCP1_2"/>
    <property type="match status" value="1"/>
</dbReference>
<name>THSG_SACSH</name>
<feature type="chain" id="PRO_0000128406" description="Thermosome subunit gamma">
    <location>
        <begin position="1"/>
        <end position="535"/>
    </location>
</feature>
<organism>
    <name type="scientific">Saccharolobus shibatae (strain ATCC 51178 / DSM 5389 / JCM 8931 / NBRC 15437 / B12)</name>
    <name type="common">Sulfolobus shibatae</name>
    <dbReference type="NCBI Taxonomy" id="523848"/>
    <lineage>
        <taxon>Archaea</taxon>
        <taxon>Thermoproteota</taxon>
        <taxon>Thermoprotei</taxon>
        <taxon>Sulfolobales</taxon>
        <taxon>Sulfolobaceae</taxon>
        <taxon>Saccharolobus</taxon>
    </lineage>
</organism>
<sequence length="535" mass="58538">MAYLLREGTQRSTGNEVILNNIAVAKILLEMLKSSLGPKGLDKMLVEGQDITITNDGATIVKNMEVQHPTAKLLIETAKTVDTEVGDGTTSVVVLAGLLLEKAEDLLNQKIHPTVIIEGYRKALSSSLELLKSIADKISPEDRKIVHDLVYTTLSSKFFSTEHTLEKIINLVIEASLAVLDKRDGTYDLDIKNIKIVKVNGGEFDDSELVNGIVVDKEPTNENMPKRAENVKVMLADFPLKLEKTEISMKLGISDPTQIKGYLDEQTAYVKQMVDKIKAMGVKLFITQKDIDEVASYLMGKSGIIALKNVKRSDIELLSRATGAKIASSMKDANESDLGEAKLVEVRNLGKNKYLFIQSDKAKAVTVIIKGSNNMVTDEAERSLNDAFNSIRNLLLEPYIVAGGGAVEEELAKRLRENAGKVPGKEQLAFNAFADALEEYVSILSETAGMDPISALTEIRHKHANGLKNAGIDIVKARIYDNMLELKVIDSLKVKEQVLKSATEAATAILKIDDMIAAAPAKQQPQPQQPNPYLG</sequence>
<keyword id="KW-0067">ATP-binding</keyword>
<keyword id="KW-0143">Chaperone</keyword>
<keyword id="KW-0963">Cytoplasm</keyword>
<keyword id="KW-0378">Hydrolase</keyword>
<keyword id="KW-0547">Nucleotide-binding</keyword>
<comment type="function">
    <text evidence="1">Molecular chaperone; binds unfolded polypeptides in vitro, and has a weak ATPase activity.</text>
</comment>
<comment type="catalytic activity">
    <reaction evidence="1">
        <text>ATP + H2O = ADP + phosphate + H(+)</text>
        <dbReference type="Rhea" id="RHEA:13065"/>
        <dbReference type="ChEBI" id="CHEBI:15377"/>
        <dbReference type="ChEBI" id="CHEBI:15378"/>
        <dbReference type="ChEBI" id="CHEBI:30616"/>
        <dbReference type="ChEBI" id="CHEBI:43474"/>
        <dbReference type="ChEBI" id="CHEBI:456216"/>
    </reaction>
</comment>
<comment type="subunit">
    <text evidence="1">Forms a heterooligomeric complex of two stacked nine-membered rings; one of alpha and the other of beta subunits.</text>
</comment>
<comment type="subcellular location">
    <subcellularLocation>
        <location evidence="1">Cytoplasm</location>
    </subcellularLocation>
</comment>
<comment type="similarity">
    <text evidence="4">Belongs to the TCP-1 chaperonin family.</text>
</comment>
<reference key="1">
    <citation type="submission" date="2000-10" db="EMBL/GenBank/DDBJ databases">
        <title>Sulfolobus shibatae HSP60 gamma subunit.</title>
        <authorList>
            <person name="Yaoi T."/>
            <person name="Trent J.D."/>
        </authorList>
    </citation>
    <scope>NUCLEOTIDE SEQUENCE [GENOMIC DNA]</scope>
    <source>
        <strain>ATCC 51178 / DSM 5389 / JCM 8931 / NBRC 15437 / B12</strain>
    </source>
</reference>
<reference evidence="5" key="2">
    <citation type="journal article" date="2021" name="Environ. Microbiol.">
        <title>New insights into the diversity and evolution of the archaeal mobilome from three complete genomes of Saccharolobus shibatae.</title>
        <authorList>
            <person name="Medvedeva S."/>
            <person name="Brandt D."/>
            <person name="Cvirkaite-Krupovic V."/>
            <person name="Liu Y."/>
            <person name="Severinov K."/>
            <person name="Ishino S."/>
            <person name="Ishino Y."/>
            <person name="Prangishvili D."/>
            <person name="Kalinowski J."/>
            <person name="Krupovic M."/>
        </authorList>
    </citation>
    <scope>NUCLEOTIDE SEQUENCE [LARGE SCALE GENOMIC DNA]</scope>
    <source>
        <strain>ATCC 51178 / DSM 5389 / JCM 8931 / NBRC 15437 / B12</strain>
    </source>
</reference>
<reference key="3">
    <citation type="journal article" date="1999" name="Curr. Biol.">
        <title>Recurrent paralogy in the evolution of archaeal chaperonins.</title>
        <authorList>
            <person name="Archibald J.M."/>
            <person name="Logsdon J.M. Jr."/>
            <person name="Doolittle W.F."/>
        </authorList>
    </citation>
    <scope>NUCLEOTIDE SEQUENCE [GENOMIC DNA] OF 90-401</scope>
</reference>
<proteinExistence type="inferred from homology"/>
<protein>
    <recommendedName>
        <fullName>Thermosome subunit gamma</fullName>
        <ecNumber evidence="1">3.6.4.-</ecNumber>
    </recommendedName>
    <alternativeName>
        <fullName evidence="2">Chaperonin subunit gamma</fullName>
    </alternativeName>
    <alternativeName>
        <fullName evidence="3">HSP60 gamma subunit</fullName>
    </alternativeName>
    <alternativeName>
        <fullName>Thermophilic factor 55 gamma</fullName>
        <shortName evidence="2">TF55-gamma</shortName>
    </alternativeName>
    <alternativeName>
        <fullName>Thermosome subunit 3</fullName>
    </alternativeName>
</protein>
<evidence type="ECO:0000250" key="1">
    <source>
        <dbReference type="UniProtKB" id="P28488"/>
    </source>
</evidence>
<evidence type="ECO:0000303" key="2">
    <source>
    </source>
</evidence>
<evidence type="ECO:0000303" key="3">
    <source ref="1"/>
</evidence>
<evidence type="ECO:0000305" key="4"/>
<evidence type="ECO:0000312" key="5">
    <source>
        <dbReference type="EMBL" id="QXJ27636.1"/>
    </source>
</evidence>
<accession>Q9HH21</accession>
<accession>A0A8F5BLS2</accession>
<accession>Q9V2T6</accession>
<gene>
    <name type="primary">thsC</name>
    <name type="synonym">thsG</name>
    <name evidence="5" type="ORF">J5U23_00503</name>
</gene>